<keyword id="KW-0143">Chaperone</keyword>
<keyword id="KW-0963">Cytoplasm</keyword>
<keyword id="KW-1185">Reference proteome</keyword>
<keyword id="KW-0346">Stress response</keyword>
<organism>
    <name type="scientific">Methanothermobacter thermautotrophicus (strain ATCC 29096 / DSM 1053 / JCM 10044 / NBRC 100330 / Delta H)</name>
    <name type="common">Methanobacterium thermoautotrophicum</name>
    <dbReference type="NCBI Taxonomy" id="187420"/>
    <lineage>
        <taxon>Archaea</taxon>
        <taxon>Methanobacteriati</taxon>
        <taxon>Methanobacteriota</taxon>
        <taxon>Methanomada group</taxon>
        <taxon>Methanobacteria</taxon>
        <taxon>Methanobacteriales</taxon>
        <taxon>Methanobacteriaceae</taxon>
        <taxon>Methanothermobacter</taxon>
    </lineage>
</organism>
<feature type="chain" id="PRO_0000113909" description="Protein GrpE">
    <location>
        <begin position="1"/>
        <end position="174"/>
    </location>
</feature>
<evidence type="ECO:0000255" key="1">
    <source>
        <dbReference type="HAMAP-Rule" id="MF_01151"/>
    </source>
</evidence>
<accession>O27350</accession>
<gene>
    <name evidence="1" type="primary">grpE</name>
    <name type="ordered locus">MTH_1289</name>
</gene>
<comment type="function">
    <text evidence="1">Participates actively in the response to hyperosmotic and heat shock by preventing the aggregation of stress-denatured proteins, in association with DnaK and GrpE. It is the nucleotide exchange factor for DnaK and may function as a thermosensor. Unfolded proteins bind initially to DnaJ; upon interaction with the DnaJ-bound protein, DnaK hydrolyzes its bound ATP, resulting in the formation of a stable complex. GrpE releases ADP from DnaK; ATP binding to DnaK triggers the release of the substrate protein, thus completing the reaction cycle. Several rounds of ATP-dependent interactions between DnaJ, DnaK and GrpE are required for fully efficient folding.</text>
</comment>
<comment type="subunit">
    <text evidence="1">Homodimer.</text>
</comment>
<comment type="subcellular location">
    <subcellularLocation>
        <location evidence="1">Cytoplasm</location>
    </subcellularLocation>
</comment>
<comment type="similarity">
    <text evidence="1">Belongs to the GrpE family.</text>
</comment>
<reference key="1">
    <citation type="journal article" date="1997" name="J. Bacteriol.">
        <title>Complete genome sequence of Methanobacterium thermoautotrophicum deltaH: functional analysis and comparative genomics.</title>
        <authorList>
            <person name="Smith D.R."/>
            <person name="Doucette-Stamm L.A."/>
            <person name="Deloughery C."/>
            <person name="Lee H.-M."/>
            <person name="Dubois J."/>
            <person name="Aldredge T."/>
            <person name="Bashirzadeh R."/>
            <person name="Blakely D."/>
            <person name="Cook R."/>
            <person name="Gilbert K."/>
            <person name="Harrison D."/>
            <person name="Hoang L."/>
            <person name="Keagle P."/>
            <person name="Lumm W."/>
            <person name="Pothier B."/>
            <person name="Qiu D."/>
            <person name="Spadafora R."/>
            <person name="Vicare R."/>
            <person name="Wang Y."/>
            <person name="Wierzbowski J."/>
            <person name="Gibson R."/>
            <person name="Jiwani N."/>
            <person name="Caruso A."/>
            <person name="Bush D."/>
            <person name="Safer H."/>
            <person name="Patwell D."/>
            <person name="Prabhakar S."/>
            <person name="McDougall S."/>
            <person name="Shimer G."/>
            <person name="Goyal A."/>
            <person name="Pietrovski S."/>
            <person name="Church G.M."/>
            <person name="Daniels C.J."/>
            <person name="Mao J.-I."/>
            <person name="Rice P."/>
            <person name="Noelling J."/>
            <person name="Reeve J.N."/>
        </authorList>
    </citation>
    <scope>NUCLEOTIDE SEQUENCE [LARGE SCALE GENOMIC DNA]</scope>
    <source>
        <strain>ATCC 29096 / DSM 1053 / JCM 10044 / NBRC 100330 / Delta H</strain>
    </source>
</reference>
<dbReference type="EMBL" id="AE000666">
    <property type="protein sequence ID" value="AAB85771.1"/>
    <property type="molecule type" value="Genomic_DNA"/>
</dbReference>
<dbReference type="PIR" id="E69038">
    <property type="entry name" value="E69038"/>
</dbReference>
<dbReference type="RefSeq" id="WP_010876906.1">
    <property type="nucleotide sequence ID" value="NC_000916.1"/>
</dbReference>
<dbReference type="SMR" id="O27350"/>
<dbReference type="STRING" id="187420.MTH_1289"/>
<dbReference type="PaxDb" id="187420-MTH_1289"/>
<dbReference type="EnsemblBacteria" id="AAB85771">
    <property type="protein sequence ID" value="AAB85771"/>
    <property type="gene ID" value="MTH_1289"/>
</dbReference>
<dbReference type="KEGG" id="mth:MTH_1289"/>
<dbReference type="PATRIC" id="fig|187420.15.peg.1262"/>
<dbReference type="HOGENOM" id="CLU_057217_5_2_2"/>
<dbReference type="InParanoid" id="O27350"/>
<dbReference type="Proteomes" id="UP000005223">
    <property type="component" value="Chromosome"/>
</dbReference>
<dbReference type="GO" id="GO:0005737">
    <property type="term" value="C:cytoplasm"/>
    <property type="evidence" value="ECO:0007669"/>
    <property type="project" value="UniProtKB-SubCell"/>
</dbReference>
<dbReference type="GO" id="GO:0000774">
    <property type="term" value="F:adenyl-nucleotide exchange factor activity"/>
    <property type="evidence" value="ECO:0007669"/>
    <property type="project" value="InterPro"/>
</dbReference>
<dbReference type="GO" id="GO:0042803">
    <property type="term" value="F:protein homodimerization activity"/>
    <property type="evidence" value="ECO:0007669"/>
    <property type="project" value="InterPro"/>
</dbReference>
<dbReference type="GO" id="GO:0051087">
    <property type="term" value="F:protein-folding chaperone binding"/>
    <property type="evidence" value="ECO:0007669"/>
    <property type="project" value="InterPro"/>
</dbReference>
<dbReference type="GO" id="GO:0051082">
    <property type="term" value="F:unfolded protein binding"/>
    <property type="evidence" value="ECO:0007669"/>
    <property type="project" value="TreeGrafter"/>
</dbReference>
<dbReference type="GO" id="GO:0006457">
    <property type="term" value="P:protein folding"/>
    <property type="evidence" value="ECO:0007669"/>
    <property type="project" value="InterPro"/>
</dbReference>
<dbReference type="CDD" id="cd00446">
    <property type="entry name" value="GrpE"/>
    <property type="match status" value="1"/>
</dbReference>
<dbReference type="Gene3D" id="3.90.20.20">
    <property type="match status" value="1"/>
</dbReference>
<dbReference type="Gene3D" id="2.30.22.10">
    <property type="entry name" value="Head domain of nucleotide exchange factor GrpE"/>
    <property type="match status" value="1"/>
</dbReference>
<dbReference type="HAMAP" id="MF_01151">
    <property type="entry name" value="GrpE"/>
    <property type="match status" value="1"/>
</dbReference>
<dbReference type="InterPro" id="IPR000740">
    <property type="entry name" value="GrpE"/>
</dbReference>
<dbReference type="InterPro" id="IPR013805">
    <property type="entry name" value="GrpE_coiled_coil"/>
</dbReference>
<dbReference type="InterPro" id="IPR009012">
    <property type="entry name" value="GrpE_head"/>
</dbReference>
<dbReference type="PANTHER" id="PTHR21237">
    <property type="entry name" value="GRPE PROTEIN"/>
    <property type="match status" value="1"/>
</dbReference>
<dbReference type="PANTHER" id="PTHR21237:SF23">
    <property type="entry name" value="GRPE PROTEIN HOMOLOG, MITOCHONDRIAL"/>
    <property type="match status" value="1"/>
</dbReference>
<dbReference type="Pfam" id="PF01025">
    <property type="entry name" value="GrpE"/>
    <property type="match status" value="1"/>
</dbReference>
<dbReference type="PRINTS" id="PR00773">
    <property type="entry name" value="GRPEPROTEIN"/>
</dbReference>
<dbReference type="SUPFAM" id="SSF58014">
    <property type="entry name" value="Coiled-coil domain of nucleotide exchange factor GrpE"/>
    <property type="match status" value="1"/>
</dbReference>
<dbReference type="SUPFAM" id="SSF51064">
    <property type="entry name" value="Head domain of nucleotide exchange factor GrpE"/>
    <property type="match status" value="1"/>
</dbReference>
<dbReference type="PROSITE" id="PS01071">
    <property type="entry name" value="GRPE"/>
    <property type="match status" value="1"/>
</dbReference>
<name>GRPE_METTH</name>
<protein>
    <recommendedName>
        <fullName evidence="1">Protein GrpE</fullName>
    </recommendedName>
    <alternativeName>
        <fullName evidence="1">HSP-70 cofactor</fullName>
    </alternativeName>
</protein>
<sequence>MCEDKKTDSRSQQECQKELEELRERLKDLENEIKKKEEEVREYTSHLQRLQADFDNYKKQMEKQELEIIKNANERLILKLLDVYEDLERAIENQDSSMDGLEVIYRKFRDTLTKEGLSEIPAEGEKFDPFLHEAVMVEDHDGYEDGIIIEELSRGYRLNDRIIKHSIVKVCKKS</sequence>
<proteinExistence type="inferred from homology"/>